<sequence>MSQQVIIFDTTLRDGEQALQASLSVKEKLQIALALERMGVDVMEVGFPVSSPGDFESVQTIARQIKNSRVCGLARCVEKDIDAAYEALRVADAYRIHTFLATSPMHIATKLRSTLPEVIERAVKMIRRARNYTDDVEFSCEDGGRTPIDDLCRVVEAAINAGATTINIPDTVGYTLPYEYANIFSALRARVPNIDKAILSVHTHDDLGMAVGNALAAVNAGARQIEGAMNGLGERAGNCALEETIMAIKTRGQLMNVHTRINHQEIYRTCQTVSKICNMPIPAHKAIIGSNAFAHSSGIHQDGVLKNRENYEILTPESIGLKQVQLNLTSRSGRAAVKHRMEEMGYGETEYNMDRLYDAFKALADKKGQVFDYDLEALAFINQQSEEPEYFRLDTFNVQSGSSVIATATVQLRCGDEQKTEAATGNGPVDAVYQAINRLTEFDAELVSYQLTAKGHGKDALGQVDIVVQYNGRKFHGVGLATDIVESSAKAMVNALNTIWRARQVEQELQRKSQVKDQKETV</sequence>
<feature type="chain" id="PRO_1000149201" description="2-isopropylmalate synthase">
    <location>
        <begin position="1"/>
        <end position="522"/>
    </location>
</feature>
<feature type="domain" description="Pyruvate carboxyltransferase" evidence="1">
    <location>
        <begin position="5"/>
        <end position="267"/>
    </location>
</feature>
<feature type="region of interest" description="Regulatory domain" evidence="1">
    <location>
        <begin position="392"/>
        <end position="522"/>
    </location>
</feature>
<feature type="binding site" evidence="1">
    <location>
        <position position="14"/>
    </location>
    <ligand>
        <name>Mn(2+)</name>
        <dbReference type="ChEBI" id="CHEBI:29035"/>
    </ligand>
</feature>
<feature type="binding site" evidence="1">
    <location>
        <position position="202"/>
    </location>
    <ligand>
        <name>Mn(2+)</name>
        <dbReference type="ChEBI" id="CHEBI:29035"/>
    </ligand>
</feature>
<feature type="binding site" evidence="1">
    <location>
        <position position="204"/>
    </location>
    <ligand>
        <name>Mn(2+)</name>
        <dbReference type="ChEBI" id="CHEBI:29035"/>
    </ligand>
</feature>
<feature type="binding site" evidence="1">
    <location>
        <position position="238"/>
    </location>
    <ligand>
        <name>Mn(2+)</name>
        <dbReference type="ChEBI" id="CHEBI:29035"/>
    </ligand>
</feature>
<protein>
    <recommendedName>
        <fullName evidence="1">2-isopropylmalate synthase</fullName>
        <ecNumber evidence="1">2.3.3.13</ecNumber>
    </recommendedName>
    <alternativeName>
        <fullName evidence="1">Alpha-IPM synthase</fullName>
    </alternativeName>
    <alternativeName>
        <fullName evidence="1">Alpha-isopropylmalate synthase</fullName>
    </alternativeName>
</protein>
<reference key="1">
    <citation type="journal article" date="2008" name="Environ. Microbiol.">
        <title>The genome of Erwinia tasmaniensis strain Et1/99, a non-pathogenic bacterium in the genus Erwinia.</title>
        <authorList>
            <person name="Kube M."/>
            <person name="Migdoll A.M."/>
            <person name="Mueller I."/>
            <person name="Kuhl H."/>
            <person name="Beck A."/>
            <person name="Reinhardt R."/>
            <person name="Geider K."/>
        </authorList>
    </citation>
    <scope>NUCLEOTIDE SEQUENCE [LARGE SCALE GENOMIC DNA]</scope>
    <source>
        <strain>DSM 17950 / CFBP 7177 / CIP 109463 / NCPPB 4357 / Et1/99</strain>
    </source>
</reference>
<gene>
    <name evidence="1" type="primary">leuA</name>
    <name type="ordered locus">ETA_07420</name>
</gene>
<keyword id="KW-0028">Amino-acid biosynthesis</keyword>
<keyword id="KW-0100">Branched-chain amino acid biosynthesis</keyword>
<keyword id="KW-0963">Cytoplasm</keyword>
<keyword id="KW-0432">Leucine biosynthesis</keyword>
<keyword id="KW-0464">Manganese</keyword>
<keyword id="KW-0479">Metal-binding</keyword>
<keyword id="KW-1185">Reference proteome</keyword>
<keyword id="KW-0808">Transferase</keyword>
<dbReference type="EC" id="2.3.3.13" evidence="1"/>
<dbReference type="EMBL" id="CU468135">
    <property type="protein sequence ID" value="CAO95788.1"/>
    <property type="molecule type" value="Genomic_DNA"/>
</dbReference>
<dbReference type="RefSeq" id="WP_012440490.1">
    <property type="nucleotide sequence ID" value="NC_010694.1"/>
</dbReference>
<dbReference type="SMR" id="B2VDA7"/>
<dbReference type="STRING" id="465817.ETA_07420"/>
<dbReference type="KEGG" id="eta:ETA_07420"/>
<dbReference type="eggNOG" id="COG0119">
    <property type="taxonomic scope" value="Bacteria"/>
</dbReference>
<dbReference type="HOGENOM" id="CLU_022158_0_1_6"/>
<dbReference type="OrthoDB" id="9803573at2"/>
<dbReference type="UniPathway" id="UPA00048">
    <property type="reaction ID" value="UER00070"/>
</dbReference>
<dbReference type="Proteomes" id="UP000001726">
    <property type="component" value="Chromosome"/>
</dbReference>
<dbReference type="GO" id="GO:0005829">
    <property type="term" value="C:cytosol"/>
    <property type="evidence" value="ECO:0007669"/>
    <property type="project" value="TreeGrafter"/>
</dbReference>
<dbReference type="GO" id="GO:0003852">
    <property type="term" value="F:2-isopropylmalate synthase activity"/>
    <property type="evidence" value="ECO:0007669"/>
    <property type="project" value="UniProtKB-UniRule"/>
</dbReference>
<dbReference type="GO" id="GO:0003985">
    <property type="term" value="F:acetyl-CoA C-acetyltransferase activity"/>
    <property type="evidence" value="ECO:0007669"/>
    <property type="project" value="UniProtKB-UniRule"/>
</dbReference>
<dbReference type="GO" id="GO:0030145">
    <property type="term" value="F:manganese ion binding"/>
    <property type="evidence" value="ECO:0007669"/>
    <property type="project" value="UniProtKB-UniRule"/>
</dbReference>
<dbReference type="GO" id="GO:0009098">
    <property type="term" value="P:L-leucine biosynthetic process"/>
    <property type="evidence" value="ECO:0007669"/>
    <property type="project" value="UniProtKB-UniRule"/>
</dbReference>
<dbReference type="CDD" id="cd07940">
    <property type="entry name" value="DRE_TIM_IPMS"/>
    <property type="match status" value="1"/>
</dbReference>
<dbReference type="FunFam" id="1.10.238.260:FF:000001">
    <property type="entry name" value="2-isopropylmalate synthase"/>
    <property type="match status" value="1"/>
</dbReference>
<dbReference type="FunFam" id="3.20.20.70:FF:000010">
    <property type="entry name" value="2-isopropylmalate synthase"/>
    <property type="match status" value="1"/>
</dbReference>
<dbReference type="FunFam" id="3.30.160.270:FF:000001">
    <property type="entry name" value="2-isopropylmalate synthase"/>
    <property type="match status" value="1"/>
</dbReference>
<dbReference type="Gene3D" id="1.10.238.260">
    <property type="match status" value="1"/>
</dbReference>
<dbReference type="Gene3D" id="3.30.160.270">
    <property type="match status" value="1"/>
</dbReference>
<dbReference type="Gene3D" id="3.20.20.70">
    <property type="entry name" value="Aldolase class I"/>
    <property type="match status" value="1"/>
</dbReference>
<dbReference type="HAMAP" id="MF_01025">
    <property type="entry name" value="LeuA_type1"/>
    <property type="match status" value="1"/>
</dbReference>
<dbReference type="InterPro" id="IPR050073">
    <property type="entry name" value="2-IPM_HCS-like"/>
</dbReference>
<dbReference type="InterPro" id="IPR013709">
    <property type="entry name" value="2-isopropylmalate_synth_dimer"/>
</dbReference>
<dbReference type="InterPro" id="IPR002034">
    <property type="entry name" value="AIPM/Hcit_synth_CS"/>
</dbReference>
<dbReference type="InterPro" id="IPR013785">
    <property type="entry name" value="Aldolase_TIM"/>
</dbReference>
<dbReference type="InterPro" id="IPR054691">
    <property type="entry name" value="LeuA/HCS_post-cat"/>
</dbReference>
<dbReference type="InterPro" id="IPR036230">
    <property type="entry name" value="LeuA_allosteric_dom_sf"/>
</dbReference>
<dbReference type="InterPro" id="IPR005671">
    <property type="entry name" value="LeuA_bact_synth"/>
</dbReference>
<dbReference type="InterPro" id="IPR000891">
    <property type="entry name" value="PYR_CT"/>
</dbReference>
<dbReference type="NCBIfam" id="TIGR00973">
    <property type="entry name" value="leuA_bact"/>
    <property type="match status" value="1"/>
</dbReference>
<dbReference type="NCBIfam" id="NF002084">
    <property type="entry name" value="PRK00915.1-1"/>
    <property type="match status" value="1"/>
</dbReference>
<dbReference type="NCBIfam" id="NF002086">
    <property type="entry name" value="PRK00915.1-3"/>
    <property type="match status" value="1"/>
</dbReference>
<dbReference type="PANTHER" id="PTHR10277:SF9">
    <property type="entry name" value="2-ISOPROPYLMALATE SYNTHASE 1, CHLOROPLASTIC-RELATED"/>
    <property type="match status" value="1"/>
</dbReference>
<dbReference type="PANTHER" id="PTHR10277">
    <property type="entry name" value="HOMOCITRATE SYNTHASE-RELATED"/>
    <property type="match status" value="1"/>
</dbReference>
<dbReference type="Pfam" id="PF22617">
    <property type="entry name" value="HCS_D2"/>
    <property type="match status" value="1"/>
</dbReference>
<dbReference type="Pfam" id="PF00682">
    <property type="entry name" value="HMGL-like"/>
    <property type="match status" value="1"/>
</dbReference>
<dbReference type="Pfam" id="PF08502">
    <property type="entry name" value="LeuA_dimer"/>
    <property type="match status" value="1"/>
</dbReference>
<dbReference type="SMART" id="SM00917">
    <property type="entry name" value="LeuA_dimer"/>
    <property type="match status" value="1"/>
</dbReference>
<dbReference type="SUPFAM" id="SSF110921">
    <property type="entry name" value="2-isopropylmalate synthase LeuA, allosteric (dimerisation) domain"/>
    <property type="match status" value="1"/>
</dbReference>
<dbReference type="SUPFAM" id="SSF51569">
    <property type="entry name" value="Aldolase"/>
    <property type="match status" value="1"/>
</dbReference>
<dbReference type="PROSITE" id="PS00815">
    <property type="entry name" value="AIPM_HOMOCIT_SYNTH_1"/>
    <property type="match status" value="1"/>
</dbReference>
<dbReference type="PROSITE" id="PS00816">
    <property type="entry name" value="AIPM_HOMOCIT_SYNTH_2"/>
    <property type="match status" value="1"/>
</dbReference>
<dbReference type="PROSITE" id="PS50991">
    <property type="entry name" value="PYR_CT"/>
    <property type="match status" value="1"/>
</dbReference>
<name>LEU1_ERWT9</name>
<evidence type="ECO:0000255" key="1">
    <source>
        <dbReference type="HAMAP-Rule" id="MF_01025"/>
    </source>
</evidence>
<organism>
    <name type="scientific">Erwinia tasmaniensis (strain DSM 17950 / CFBP 7177 / CIP 109463 / NCPPB 4357 / Et1/99)</name>
    <dbReference type="NCBI Taxonomy" id="465817"/>
    <lineage>
        <taxon>Bacteria</taxon>
        <taxon>Pseudomonadati</taxon>
        <taxon>Pseudomonadota</taxon>
        <taxon>Gammaproteobacteria</taxon>
        <taxon>Enterobacterales</taxon>
        <taxon>Erwiniaceae</taxon>
        <taxon>Erwinia</taxon>
    </lineage>
</organism>
<proteinExistence type="inferred from homology"/>
<comment type="function">
    <text evidence="1">Catalyzes the condensation of the acetyl group of acetyl-CoA with 3-methyl-2-oxobutanoate (2-ketoisovalerate) to form 3-carboxy-3-hydroxy-4-methylpentanoate (2-isopropylmalate).</text>
</comment>
<comment type="catalytic activity">
    <reaction evidence="1">
        <text>3-methyl-2-oxobutanoate + acetyl-CoA + H2O = (2S)-2-isopropylmalate + CoA + H(+)</text>
        <dbReference type="Rhea" id="RHEA:21524"/>
        <dbReference type="ChEBI" id="CHEBI:1178"/>
        <dbReference type="ChEBI" id="CHEBI:11851"/>
        <dbReference type="ChEBI" id="CHEBI:15377"/>
        <dbReference type="ChEBI" id="CHEBI:15378"/>
        <dbReference type="ChEBI" id="CHEBI:57287"/>
        <dbReference type="ChEBI" id="CHEBI:57288"/>
        <dbReference type="EC" id="2.3.3.13"/>
    </reaction>
</comment>
<comment type="cofactor">
    <cofactor evidence="1">
        <name>Mn(2+)</name>
        <dbReference type="ChEBI" id="CHEBI:29035"/>
    </cofactor>
</comment>
<comment type="pathway">
    <text evidence="1">Amino-acid biosynthesis; L-leucine biosynthesis; L-leucine from 3-methyl-2-oxobutanoate: step 1/4.</text>
</comment>
<comment type="subunit">
    <text evidence="1">Homodimer.</text>
</comment>
<comment type="subcellular location">
    <subcellularLocation>
        <location evidence="1">Cytoplasm</location>
    </subcellularLocation>
</comment>
<comment type="similarity">
    <text evidence="1">Belongs to the alpha-IPM synthase/homocitrate synthase family. LeuA type 1 subfamily.</text>
</comment>
<accession>B2VDA7</accession>